<accession>Q8EQV0</accession>
<proteinExistence type="inferred from homology"/>
<reference key="1">
    <citation type="journal article" date="2002" name="Nucleic Acids Res.">
        <title>Genome sequence of Oceanobacillus iheyensis isolated from the Iheya Ridge and its unexpected adaptive capabilities to extreme environments.</title>
        <authorList>
            <person name="Takami H."/>
            <person name="Takaki Y."/>
            <person name="Uchiyama I."/>
        </authorList>
    </citation>
    <scope>NUCLEOTIDE SEQUENCE [LARGE SCALE GENOMIC DNA]</scope>
    <source>
        <strain>DSM 14371 / CIP 107618 / JCM 11309 / KCTC 3954 / HTE831</strain>
    </source>
</reference>
<evidence type="ECO:0000255" key="1">
    <source>
        <dbReference type="HAMAP-Rule" id="MF_00040"/>
    </source>
</evidence>
<gene>
    <name evidence="1" type="primary">frr</name>
    <name type="ordered locus">OB1589</name>
</gene>
<sequence length="185" mass="20571">MSASELKEMEQKMEQAVQALSKNLASVRAGRANPSILDSVFVDYYGASTPLNQLASVGAPEARLLTITPYDKSAIGDIEKAIQKADLGLSPSSDGNIIRINIPALTQERRKDLVKVVGKYSEEAKVQIRNIRRDTNDQLKKMEKNGDLTEDDLRGFQDDVQTSTNDYINKIDQLAKNKENEIMEV</sequence>
<name>RRF_OCEIH</name>
<keyword id="KW-0963">Cytoplasm</keyword>
<keyword id="KW-0648">Protein biosynthesis</keyword>
<keyword id="KW-1185">Reference proteome</keyword>
<organism>
    <name type="scientific">Oceanobacillus iheyensis (strain DSM 14371 / CIP 107618 / JCM 11309 / KCTC 3954 / HTE831)</name>
    <dbReference type="NCBI Taxonomy" id="221109"/>
    <lineage>
        <taxon>Bacteria</taxon>
        <taxon>Bacillati</taxon>
        <taxon>Bacillota</taxon>
        <taxon>Bacilli</taxon>
        <taxon>Bacillales</taxon>
        <taxon>Bacillaceae</taxon>
        <taxon>Oceanobacillus</taxon>
    </lineage>
</organism>
<dbReference type="EMBL" id="BA000028">
    <property type="protein sequence ID" value="BAC13545.1"/>
    <property type="molecule type" value="Genomic_DNA"/>
</dbReference>
<dbReference type="RefSeq" id="WP_011065989.1">
    <property type="nucleotide sequence ID" value="NC_004193.1"/>
</dbReference>
<dbReference type="SMR" id="Q8EQV0"/>
<dbReference type="STRING" id="221109.gene:10733829"/>
<dbReference type="KEGG" id="oih:OB1589"/>
<dbReference type="eggNOG" id="COG0233">
    <property type="taxonomic scope" value="Bacteria"/>
</dbReference>
<dbReference type="HOGENOM" id="CLU_073981_2_0_9"/>
<dbReference type="OrthoDB" id="9804006at2"/>
<dbReference type="PhylomeDB" id="Q8EQV0"/>
<dbReference type="Proteomes" id="UP000000822">
    <property type="component" value="Chromosome"/>
</dbReference>
<dbReference type="GO" id="GO:0005737">
    <property type="term" value="C:cytoplasm"/>
    <property type="evidence" value="ECO:0007669"/>
    <property type="project" value="UniProtKB-SubCell"/>
</dbReference>
<dbReference type="GO" id="GO:0043023">
    <property type="term" value="F:ribosomal large subunit binding"/>
    <property type="evidence" value="ECO:0007669"/>
    <property type="project" value="TreeGrafter"/>
</dbReference>
<dbReference type="GO" id="GO:0006415">
    <property type="term" value="P:translational termination"/>
    <property type="evidence" value="ECO:0007669"/>
    <property type="project" value="UniProtKB-UniRule"/>
</dbReference>
<dbReference type="CDD" id="cd00520">
    <property type="entry name" value="RRF"/>
    <property type="match status" value="1"/>
</dbReference>
<dbReference type="FunFam" id="1.10.132.20:FF:000001">
    <property type="entry name" value="Ribosome-recycling factor"/>
    <property type="match status" value="1"/>
</dbReference>
<dbReference type="FunFam" id="3.30.1360.40:FF:000001">
    <property type="entry name" value="Ribosome-recycling factor"/>
    <property type="match status" value="1"/>
</dbReference>
<dbReference type="Gene3D" id="3.30.1360.40">
    <property type="match status" value="1"/>
</dbReference>
<dbReference type="Gene3D" id="1.10.132.20">
    <property type="entry name" value="Ribosome-recycling factor"/>
    <property type="match status" value="1"/>
</dbReference>
<dbReference type="HAMAP" id="MF_00040">
    <property type="entry name" value="RRF"/>
    <property type="match status" value="1"/>
</dbReference>
<dbReference type="InterPro" id="IPR002661">
    <property type="entry name" value="Ribosome_recyc_fac"/>
</dbReference>
<dbReference type="InterPro" id="IPR023584">
    <property type="entry name" value="Ribosome_recyc_fac_dom"/>
</dbReference>
<dbReference type="InterPro" id="IPR036191">
    <property type="entry name" value="RRF_sf"/>
</dbReference>
<dbReference type="NCBIfam" id="TIGR00496">
    <property type="entry name" value="frr"/>
    <property type="match status" value="1"/>
</dbReference>
<dbReference type="PANTHER" id="PTHR20982:SF3">
    <property type="entry name" value="MITOCHONDRIAL RIBOSOME RECYCLING FACTOR PSEUDO 1"/>
    <property type="match status" value="1"/>
</dbReference>
<dbReference type="PANTHER" id="PTHR20982">
    <property type="entry name" value="RIBOSOME RECYCLING FACTOR"/>
    <property type="match status" value="1"/>
</dbReference>
<dbReference type="Pfam" id="PF01765">
    <property type="entry name" value="RRF"/>
    <property type="match status" value="1"/>
</dbReference>
<dbReference type="SUPFAM" id="SSF55194">
    <property type="entry name" value="Ribosome recycling factor, RRF"/>
    <property type="match status" value="1"/>
</dbReference>
<feature type="chain" id="PRO_0000167506" description="Ribosome-recycling factor">
    <location>
        <begin position="1"/>
        <end position="185"/>
    </location>
</feature>
<comment type="function">
    <text evidence="1">Responsible for the release of ribosomes from messenger RNA at the termination of protein biosynthesis. May increase the efficiency of translation by recycling ribosomes from one round of translation to another.</text>
</comment>
<comment type="subcellular location">
    <subcellularLocation>
        <location evidence="1">Cytoplasm</location>
    </subcellularLocation>
</comment>
<comment type="similarity">
    <text evidence="1">Belongs to the RRF family.</text>
</comment>
<protein>
    <recommendedName>
        <fullName evidence="1">Ribosome-recycling factor</fullName>
        <shortName evidence="1">RRF</shortName>
    </recommendedName>
    <alternativeName>
        <fullName evidence="1">Ribosome-releasing factor</fullName>
    </alternativeName>
</protein>